<evidence type="ECO:0000250" key="1"/>
<evidence type="ECO:0000305" key="2"/>
<gene>
    <name type="primary">DYS1</name>
    <name type="ordered locus">AAL036W</name>
</gene>
<dbReference type="EC" id="2.5.1.46"/>
<dbReference type="EMBL" id="AE016814">
    <property type="protein sequence ID" value="AAS50330.1"/>
    <property type="molecule type" value="Genomic_DNA"/>
</dbReference>
<dbReference type="RefSeq" id="NP_982506.1">
    <property type="nucleotide sequence ID" value="NM_207859.1"/>
</dbReference>
<dbReference type="SMR" id="Q75EW4"/>
<dbReference type="FunCoup" id="Q75EW4">
    <property type="interactions" value="724"/>
</dbReference>
<dbReference type="STRING" id="284811.Q75EW4"/>
<dbReference type="EnsemblFungi" id="AAS50330">
    <property type="protein sequence ID" value="AAS50330"/>
    <property type="gene ID" value="AGOS_AAL036W"/>
</dbReference>
<dbReference type="GeneID" id="4618497"/>
<dbReference type="KEGG" id="ago:AGOS_AAL036W"/>
<dbReference type="eggNOG" id="KOG2924">
    <property type="taxonomic scope" value="Eukaryota"/>
</dbReference>
<dbReference type="HOGENOM" id="CLU_039781_0_0_1"/>
<dbReference type="InParanoid" id="Q75EW4"/>
<dbReference type="OMA" id="HSIINAN"/>
<dbReference type="OrthoDB" id="294378at2759"/>
<dbReference type="UniPathway" id="UPA00354"/>
<dbReference type="Proteomes" id="UP000000591">
    <property type="component" value="Chromosome I"/>
</dbReference>
<dbReference type="GO" id="GO:0005737">
    <property type="term" value="C:cytoplasm"/>
    <property type="evidence" value="ECO:0000318"/>
    <property type="project" value="GO_Central"/>
</dbReference>
<dbReference type="GO" id="GO:0034038">
    <property type="term" value="F:deoxyhypusine synthase activity"/>
    <property type="evidence" value="ECO:0000318"/>
    <property type="project" value="GO_Central"/>
</dbReference>
<dbReference type="GO" id="GO:0008216">
    <property type="term" value="P:spermidine metabolic process"/>
    <property type="evidence" value="ECO:0000318"/>
    <property type="project" value="GO_Central"/>
</dbReference>
<dbReference type="FunFam" id="3.40.910.10:FF:000003">
    <property type="entry name" value="Deoxyhypusine synthase"/>
    <property type="match status" value="1"/>
</dbReference>
<dbReference type="Gene3D" id="3.40.910.10">
    <property type="entry name" value="Deoxyhypusine synthase"/>
    <property type="match status" value="1"/>
</dbReference>
<dbReference type="InterPro" id="IPR002773">
    <property type="entry name" value="Deoxyhypusine_synthase"/>
</dbReference>
<dbReference type="InterPro" id="IPR036982">
    <property type="entry name" value="Deoxyhypusine_synthase_sf"/>
</dbReference>
<dbReference type="InterPro" id="IPR029035">
    <property type="entry name" value="DHS-like_NAD/FAD-binding_dom"/>
</dbReference>
<dbReference type="NCBIfam" id="TIGR00321">
    <property type="entry name" value="dhys"/>
    <property type="match status" value="1"/>
</dbReference>
<dbReference type="PANTHER" id="PTHR11703">
    <property type="entry name" value="DEOXYHYPUSINE SYNTHASE"/>
    <property type="match status" value="1"/>
</dbReference>
<dbReference type="PANTHER" id="PTHR11703:SF0">
    <property type="entry name" value="DEOXYHYPUSINE SYNTHASE"/>
    <property type="match status" value="1"/>
</dbReference>
<dbReference type="Pfam" id="PF01916">
    <property type="entry name" value="DS"/>
    <property type="match status" value="1"/>
</dbReference>
<dbReference type="SUPFAM" id="SSF52467">
    <property type="entry name" value="DHS-like NAD/FAD-binding domain"/>
    <property type="match status" value="1"/>
</dbReference>
<accession>Q75EW4</accession>
<reference key="1">
    <citation type="journal article" date="2004" name="Science">
        <title>The Ashbya gossypii genome as a tool for mapping the ancient Saccharomyces cerevisiae genome.</title>
        <authorList>
            <person name="Dietrich F.S."/>
            <person name="Voegeli S."/>
            <person name="Brachat S."/>
            <person name="Lerch A."/>
            <person name="Gates K."/>
            <person name="Steiner S."/>
            <person name="Mohr C."/>
            <person name="Poehlmann R."/>
            <person name="Luedi P."/>
            <person name="Choi S."/>
            <person name="Wing R.A."/>
            <person name="Flavier A."/>
            <person name="Gaffney T.D."/>
            <person name="Philippsen P."/>
        </authorList>
    </citation>
    <scope>NUCLEOTIDE SEQUENCE [LARGE SCALE GENOMIC DNA]</scope>
    <source>
        <strain>ATCC 10895 / CBS 109.51 / FGSC 9923 / NRRL Y-1056</strain>
    </source>
</reference>
<reference key="2">
    <citation type="journal article" date="2013" name="G3 (Bethesda)">
        <title>Genomes of Ashbya fungi isolated from insects reveal four mating-type loci, numerous translocations, lack of transposons, and distinct gene duplications.</title>
        <authorList>
            <person name="Dietrich F.S."/>
            <person name="Voegeli S."/>
            <person name="Kuo S."/>
            <person name="Philippsen P."/>
        </authorList>
    </citation>
    <scope>GENOME REANNOTATION</scope>
    <source>
        <strain>ATCC 10895 / CBS 109.51 / FGSC 9923 / NRRL Y-1056</strain>
    </source>
</reference>
<comment type="function">
    <text evidence="1">Catalyzes the NAD-dependent oxidative cleavage of spermidine and the subsequent transfer of the butylamine moiety of spermidine to the epsilon-amino group of a specific lysine residue of the eIF-5A precursor protein to form the intermediate deoxyhypusine residue.</text>
</comment>
<comment type="catalytic activity">
    <reaction>
        <text>[eIF5A protein]-L-lysine + spermidine = [eIF5A protein]-deoxyhypusine + propane-1,3-diamine</text>
        <dbReference type="Rhea" id="RHEA:33299"/>
        <dbReference type="Rhea" id="RHEA-COMP:10143"/>
        <dbReference type="Rhea" id="RHEA-COMP:10144"/>
        <dbReference type="ChEBI" id="CHEBI:29969"/>
        <dbReference type="ChEBI" id="CHEBI:57484"/>
        <dbReference type="ChEBI" id="CHEBI:57834"/>
        <dbReference type="ChEBI" id="CHEBI:82657"/>
        <dbReference type="EC" id="2.5.1.46"/>
    </reaction>
</comment>
<comment type="cofactor">
    <cofactor>
        <name>NAD(+)</name>
        <dbReference type="ChEBI" id="CHEBI:57540"/>
    </cofactor>
</comment>
<comment type="pathway">
    <text>Protein modification; eIF5A hypusination.</text>
</comment>
<comment type="similarity">
    <text evidence="2">Belongs to the deoxyhypusine synthase family.</text>
</comment>
<proteinExistence type="inferred from homology"/>
<feature type="chain" id="PRO_0000134480" description="Deoxyhypusine synthase">
    <location>
        <begin position="1"/>
        <end position="382"/>
    </location>
</feature>
<feature type="active site" description="Nucleophile" evidence="1">
    <location>
        <position position="350"/>
    </location>
</feature>
<feature type="binding site" evidence="1">
    <location>
        <begin position="108"/>
        <end position="112"/>
    </location>
    <ligand>
        <name>NAD(+)</name>
        <dbReference type="ChEBI" id="CHEBI:57540"/>
    </ligand>
</feature>
<feature type="binding site" evidence="1">
    <location>
        <begin position="134"/>
        <end position="136"/>
    </location>
    <ligand>
        <name>NAD(+)</name>
        <dbReference type="ChEBI" id="CHEBI:57540"/>
    </ligand>
</feature>
<feature type="binding site" evidence="1">
    <location>
        <begin position="139"/>
        <end position="140"/>
    </location>
    <ligand>
        <name>spermidine</name>
        <dbReference type="ChEBI" id="CHEBI:57834"/>
    </ligand>
</feature>
<feature type="binding site" evidence="1">
    <location>
        <position position="140"/>
    </location>
    <ligand>
        <name>NAD(+)</name>
        <dbReference type="ChEBI" id="CHEBI:57540"/>
    </ligand>
</feature>
<feature type="binding site" evidence="1">
    <location>
        <position position="257"/>
    </location>
    <ligand>
        <name>NAD(+)</name>
        <dbReference type="ChEBI" id="CHEBI:57540"/>
    </ligand>
</feature>
<feature type="binding site" evidence="1">
    <location>
        <position position="262"/>
    </location>
    <ligand>
        <name>spermidine</name>
        <dbReference type="ChEBI" id="CHEBI:57834"/>
    </ligand>
</feature>
<feature type="binding site" evidence="1">
    <location>
        <position position="304"/>
    </location>
    <ligand>
        <name>NAD(+)</name>
        <dbReference type="ChEBI" id="CHEBI:57540"/>
    </ligand>
</feature>
<feature type="binding site" evidence="1">
    <location>
        <position position="309"/>
    </location>
    <ligand>
        <name>spermidine</name>
        <dbReference type="ChEBI" id="CHEBI:57834"/>
    </ligand>
</feature>
<feature type="binding site" evidence="1">
    <location>
        <begin position="329"/>
        <end position="330"/>
    </location>
    <ligand>
        <name>NAD(+)</name>
        <dbReference type="ChEBI" id="CHEBI:57540"/>
    </ligand>
</feature>
<feature type="binding site" evidence="1">
    <location>
        <begin position="335"/>
        <end position="337"/>
    </location>
    <ligand>
        <name>spermidine</name>
        <dbReference type="ChEBI" id="CHEBI:57834"/>
    </ligand>
</feature>
<feature type="binding site" evidence="1">
    <location>
        <begin position="344"/>
        <end position="350"/>
    </location>
    <ligand>
        <name>spermidine</name>
        <dbReference type="ChEBI" id="CHEBI:57834"/>
    </ligand>
</feature>
<feature type="binding site" evidence="1">
    <location>
        <begin position="363"/>
        <end position="364"/>
    </location>
    <ligand>
        <name>NAD(+)</name>
        <dbReference type="ChEBI" id="CHEBI:57540"/>
    </ligand>
</feature>
<protein>
    <recommendedName>
        <fullName>Deoxyhypusine synthase</fullName>
        <shortName>DHS</shortName>
        <ecNumber>2.5.1.46</ecNumber>
    </recommendedName>
</protein>
<name>DHYS_EREGS</name>
<organism>
    <name type="scientific">Eremothecium gossypii (strain ATCC 10895 / CBS 109.51 / FGSC 9923 / NRRL Y-1056)</name>
    <name type="common">Yeast</name>
    <name type="synonym">Ashbya gossypii</name>
    <dbReference type="NCBI Taxonomy" id="284811"/>
    <lineage>
        <taxon>Eukaryota</taxon>
        <taxon>Fungi</taxon>
        <taxon>Dikarya</taxon>
        <taxon>Ascomycota</taxon>
        <taxon>Saccharomycotina</taxon>
        <taxon>Saccharomycetes</taxon>
        <taxon>Saccharomycetales</taxon>
        <taxon>Saccharomycetaceae</taxon>
        <taxon>Eremothecium</taxon>
    </lineage>
</organism>
<sequence length="382" mass="41984">MSNNDETVLGHLADHVFKHSGPIPESFVEVKGIDYSKPDAIDMRASDLIKSMKTMGFQASSLGQACDIIDEMRAWRGKHIDELDEYSRKGSFDENGFQKSTIFLGYTSNLISSGLRETLRYLVQHNMVSAIVTTAGGVEEDIIKCLAPTYLGEFTLKGAALRDKGMNRIGNLLVPNNNYCKFEEWIVPILDAMLAEQEAYVAQQGKDCLGVNTDVDSPIWTPSKLCDRLGKEINDESSVLYWAHKNKIPVFCPAITDGSIGDMLFLHTFRASPQQLRLDLVADIRKINSMSMEASQAGMIILGGGLIKHHIANACLMRNGADYAVYINTGQEFDGSDAGARPDEAVSWGKIKVEAKSVKVYADVTTVFPLIVAATFANGKKN</sequence>
<keyword id="KW-0386">Hypusine biosynthesis</keyword>
<keyword id="KW-0520">NAD</keyword>
<keyword id="KW-1185">Reference proteome</keyword>
<keyword id="KW-0808">Transferase</keyword>